<accession>P0DG34</accession>
<accession>Q8K8P9</accession>
<sequence>MSKPIRVRYAPSPTGLLHIGNARTALFNYLYARRHGGTFIIRIEDTDRKRHVEDGERSQLENLKWLGMDWDESPETHENYRQSERLALYQQYIDQLLAEGKAYKSYVTEEELAAERERQEAAGETPRYINEFIGMSADEKAKYIAEREAAGIVPTVRLAVNESGIYKWADMVKGDIEFEGGNIGGDWVIQKKDGYPTYNFAVVVDDHDMQISHVIRGDDHIANTPKQLMVYEALGWEAPEFGHMTLIINSETGKKLSKRDTNTLQFIEDYRKKGYMPEAVFNFIALLGWNPGGEEEIFSREQLIALFDENRLSKSPAAFDQKKMDWMSNEYLKHADFETVYALCKPFLEEAGRLTEKAEKLVELYKPQLKSADEIIPLTDLFFSDFPELTEAEKEVMAGETVSTVLQAFKAKLEAMSDEDFKPENIFPQIKAVQKETGIKGKNLFMPIRIAVSGEMHGPELPNTIYLLGRDKSIEHIKNML</sequence>
<evidence type="ECO:0000255" key="1">
    <source>
        <dbReference type="HAMAP-Rule" id="MF_00022"/>
    </source>
</evidence>
<comment type="function">
    <text evidence="1">Catalyzes the attachment of glutamate to tRNA(Glu) in a two-step reaction: glutamate is first activated by ATP to form Glu-AMP and then transferred to the acceptor end of tRNA(Glu).</text>
</comment>
<comment type="catalytic activity">
    <reaction evidence="1">
        <text>tRNA(Glu) + L-glutamate + ATP = L-glutamyl-tRNA(Glu) + AMP + diphosphate</text>
        <dbReference type="Rhea" id="RHEA:23540"/>
        <dbReference type="Rhea" id="RHEA-COMP:9663"/>
        <dbReference type="Rhea" id="RHEA-COMP:9680"/>
        <dbReference type="ChEBI" id="CHEBI:29985"/>
        <dbReference type="ChEBI" id="CHEBI:30616"/>
        <dbReference type="ChEBI" id="CHEBI:33019"/>
        <dbReference type="ChEBI" id="CHEBI:78442"/>
        <dbReference type="ChEBI" id="CHEBI:78520"/>
        <dbReference type="ChEBI" id="CHEBI:456215"/>
        <dbReference type="EC" id="6.1.1.17"/>
    </reaction>
</comment>
<comment type="subunit">
    <text evidence="1">Monomer.</text>
</comment>
<comment type="subcellular location">
    <subcellularLocation>
        <location evidence="1">Cytoplasm</location>
    </subcellularLocation>
</comment>
<comment type="similarity">
    <text evidence="1">Belongs to the class-I aminoacyl-tRNA synthetase family. Glutamate--tRNA ligase type 1 subfamily.</text>
</comment>
<feature type="chain" id="PRO_0000119668" description="Glutamate--tRNA ligase">
    <location>
        <begin position="1"/>
        <end position="481"/>
    </location>
</feature>
<feature type="short sequence motif" description="'HIGH' region" evidence="1">
    <location>
        <begin position="11"/>
        <end position="21"/>
    </location>
</feature>
<feature type="short sequence motif" description="'KMSKS' region" evidence="1">
    <location>
        <begin position="255"/>
        <end position="259"/>
    </location>
</feature>
<feature type="binding site" evidence="1">
    <location>
        <position position="258"/>
    </location>
    <ligand>
        <name>ATP</name>
        <dbReference type="ChEBI" id="CHEBI:30616"/>
    </ligand>
</feature>
<gene>
    <name evidence="1" type="primary">gltX</name>
    <name type="synonym">gluS</name>
    <name type="ordered locus">SpyM3_0170</name>
</gene>
<proteinExistence type="inferred from homology"/>
<name>SYE_STRP3</name>
<reference key="1">
    <citation type="journal article" date="2002" name="Proc. Natl. Acad. Sci. U.S.A.">
        <title>Genome sequence of a serotype M3 strain of group A Streptococcus: phage-encoded toxins, the high-virulence phenotype, and clone emergence.</title>
        <authorList>
            <person name="Beres S.B."/>
            <person name="Sylva G.L."/>
            <person name="Barbian K.D."/>
            <person name="Lei B."/>
            <person name="Hoff J.S."/>
            <person name="Mammarella N.D."/>
            <person name="Liu M.-Y."/>
            <person name="Smoot J.C."/>
            <person name="Porcella S.F."/>
            <person name="Parkins L.D."/>
            <person name="Campbell D.S."/>
            <person name="Smith T.M."/>
            <person name="McCormick J.K."/>
            <person name="Leung D.Y.M."/>
            <person name="Schlievert P.M."/>
            <person name="Musser J.M."/>
        </authorList>
    </citation>
    <scope>NUCLEOTIDE SEQUENCE [LARGE SCALE GENOMIC DNA]</scope>
    <source>
        <strain>ATCC BAA-595 / MGAS315</strain>
    </source>
</reference>
<keyword id="KW-0030">Aminoacyl-tRNA synthetase</keyword>
<keyword id="KW-0067">ATP-binding</keyword>
<keyword id="KW-0963">Cytoplasm</keyword>
<keyword id="KW-0436">Ligase</keyword>
<keyword id="KW-0547">Nucleotide-binding</keyword>
<keyword id="KW-0648">Protein biosynthesis</keyword>
<organism>
    <name type="scientific">Streptococcus pyogenes serotype M3 (strain ATCC BAA-595 / MGAS315)</name>
    <dbReference type="NCBI Taxonomy" id="198466"/>
    <lineage>
        <taxon>Bacteria</taxon>
        <taxon>Bacillati</taxon>
        <taxon>Bacillota</taxon>
        <taxon>Bacilli</taxon>
        <taxon>Lactobacillales</taxon>
        <taxon>Streptococcaceae</taxon>
        <taxon>Streptococcus</taxon>
    </lineage>
</organism>
<dbReference type="EC" id="6.1.1.17" evidence="1"/>
<dbReference type="EMBL" id="AE014074">
    <property type="protein sequence ID" value="AAM78777.1"/>
    <property type="molecule type" value="Genomic_DNA"/>
</dbReference>
<dbReference type="RefSeq" id="WP_011054161.1">
    <property type="nucleotide sequence ID" value="NC_004070.1"/>
</dbReference>
<dbReference type="SMR" id="P0DG34"/>
<dbReference type="KEGG" id="spg:SpyM3_0170"/>
<dbReference type="HOGENOM" id="CLU_015768_6_1_9"/>
<dbReference type="Proteomes" id="UP000000564">
    <property type="component" value="Chromosome"/>
</dbReference>
<dbReference type="GO" id="GO:0005829">
    <property type="term" value="C:cytosol"/>
    <property type="evidence" value="ECO:0007669"/>
    <property type="project" value="TreeGrafter"/>
</dbReference>
<dbReference type="GO" id="GO:0005524">
    <property type="term" value="F:ATP binding"/>
    <property type="evidence" value="ECO:0007669"/>
    <property type="project" value="UniProtKB-UniRule"/>
</dbReference>
<dbReference type="GO" id="GO:0004818">
    <property type="term" value="F:glutamate-tRNA ligase activity"/>
    <property type="evidence" value="ECO:0007669"/>
    <property type="project" value="UniProtKB-UniRule"/>
</dbReference>
<dbReference type="GO" id="GO:0000049">
    <property type="term" value="F:tRNA binding"/>
    <property type="evidence" value="ECO:0007669"/>
    <property type="project" value="InterPro"/>
</dbReference>
<dbReference type="GO" id="GO:0008270">
    <property type="term" value="F:zinc ion binding"/>
    <property type="evidence" value="ECO:0007669"/>
    <property type="project" value="InterPro"/>
</dbReference>
<dbReference type="GO" id="GO:0006424">
    <property type="term" value="P:glutamyl-tRNA aminoacylation"/>
    <property type="evidence" value="ECO:0007669"/>
    <property type="project" value="UniProtKB-UniRule"/>
</dbReference>
<dbReference type="CDD" id="cd00808">
    <property type="entry name" value="GluRS_core"/>
    <property type="match status" value="1"/>
</dbReference>
<dbReference type="FunFam" id="1.10.10.350:FF:000002">
    <property type="entry name" value="Glutamate--tRNA ligase"/>
    <property type="match status" value="1"/>
</dbReference>
<dbReference type="FunFam" id="3.40.50.620:FF:000007">
    <property type="entry name" value="Glutamate--tRNA ligase"/>
    <property type="match status" value="1"/>
</dbReference>
<dbReference type="Gene3D" id="1.10.10.350">
    <property type="match status" value="1"/>
</dbReference>
<dbReference type="Gene3D" id="3.40.50.620">
    <property type="entry name" value="HUPs"/>
    <property type="match status" value="1"/>
</dbReference>
<dbReference type="HAMAP" id="MF_00022">
    <property type="entry name" value="Glu_tRNA_synth_type1"/>
    <property type="match status" value="1"/>
</dbReference>
<dbReference type="InterPro" id="IPR045462">
    <property type="entry name" value="aa-tRNA-synth_I_cd-bd"/>
</dbReference>
<dbReference type="InterPro" id="IPR020751">
    <property type="entry name" value="aa-tRNA-synth_I_codon-bd_sub2"/>
</dbReference>
<dbReference type="InterPro" id="IPR001412">
    <property type="entry name" value="aa-tRNA-synth_I_CS"/>
</dbReference>
<dbReference type="InterPro" id="IPR008925">
    <property type="entry name" value="aa_tRNA-synth_I_cd-bd_sf"/>
</dbReference>
<dbReference type="InterPro" id="IPR004527">
    <property type="entry name" value="Glu-tRNA-ligase_bac/mito"/>
</dbReference>
<dbReference type="InterPro" id="IPR000924">
    <property type="entry name" value="Glu/Gln-tRNA-synth"/>
</dbReference>
<dbReference type="InterPro" id="IPR020058">
    <property type="entry name" value="Glu/Gln-tRNA-synth_Ib_cat-dom"/>
</dbReference>
<dbReference type="InterPro" id="IPR049940">
    <property type="entry name" value="GluQ/Sye"/>
</dbReference>
<dbReference type="InterPro" id="IPR033910">
    <property type="entry name" value="GluRS_core"/>
</dbReference>
<dbReference type="InterPro" id="IPR014729">
    <property type="entry name" value="Rossmann-like_a/b/a_fold"/>
</dbReference>
<dbReference type="NCBIfam" id="TIGR00464">
    <property type="entry name" value="gltX_bact"/>
    <property type="match status" value="1"/>
</dbReference>
<dbReference type="PANTHER" id="PTHR43311">
    <property type="entry name" value="GLUTAMATE--TRNA LIGASE"/>
    <property type="match status" value="1"/>
</dbReference>
<dbReference type="PANTHER" id="PTHR43311:SF2">
    <property type="entry name" value="GLUTAMATE--TRNA LIGASE, MITOCHONDRIAL-RELATED"/>
    <property type="match status" value="1"/>
</dbReference>
<dbReference type="Pfam" id="PF19269">
    <property type="entry name" value="Anticodon_2"/>
    <property type="match status" value="1"/>
</dbReference>
<dbReference type="Pfam" id="PF00749">
    <property type="entry name" value="tRNA-synt_1c"/>
    <property type="match status" value="1"/>
</dbReference>
<dbReference type="PRINTS" id="PR00987">
    <property type="entry name" value="TRNASYNTHGLU"/>
</dbReference>
<dbReference type="SUPFAM" id="SSF48163">
    <property type="entry name" value="An anticodon-binding domain of class I aminoacyl-tRNA synthetases"/>
    <property type="match status" value="1"/>
</dbReference>
<dbReference type="SUPFAM" id="SSF52374">
    <property type="entry name" value="Nucleotidylyl transferase"/>
    <property type="match status" value="1"/>
</dbReference>
<dbReference type="PROSITE" id="PS00178">
    <property type="entry name" value="AA_TRNA_LIGASE_I"/>
    <property type="match status" value="1"/>
</dbReference>
<protein>
    <recommendedName>
        <fullName evidence="1">Glutamate--tRNA ligase</fullName>
        <ecNumber evidence="1">6.1.1.17</ecNumber>
    </recommendedName>
    <alternativeName>
        <fullName evidence="1">Glutamyl-tRNA synthetase</fullName>
        <shortName evidence="1">GluRS</shortName>
    </alternativeName>
</protein>